<dbReference type="EC" id="2.1.1.199" evidence="1"/>
<dbReference type="EMBL" id="CP000903">
    <property type="protein sequence ID" value="ABY44914.1"/>
    <property type="molecule type" value="Genomic_DNA"/>
</dbReference>
<dbReference type="RefSeq" id="WP_002014746.1">
    <property type="nucleotide sequence ID" value="NC_010184.1"/>
</dbReference>
<dbReference type="SMR" id="A9VU80"/>
<dbReference type="GeneID" id="66266515"/>
<dbReference type="KEGG" id="bwe:BcerKBAB4_3745"/>
<dbReference type="eggNOG" id="COG0275">
    <property type="taxonomic scope" value="Bacteria"/>
</dbReference>
<dbReference type="HOGENOM" id="CLU_038422_2_0_9"/>
<dbReference type="Proteomes" id="UP000002154">
    <property type="component" value="Chromosome"/>
</dbReference>
<dbReference type="GO" id="GO:0005737">
    <property type="term" value="C:cytoplasm"/>
    <property type="evidence" value="ECO:0007669"/>
    <property type="project" value="UniProtKB-SubCell"/>
</dbReference>
<dbReference type="GO" id="GO:0071424">
    <property type="term" value="F:rRNA (cytosine-N4-)-methyltransferase activity"/>
    <property type="evidence" value="ECO:0007669"/>
    <property type="project" value="UniProtKB-UniRule"/>
</dbReference>
<dbReference type="GO" id="GO:0070475">
    <property type="term" value="P:rRNA base methylation"/>
    <property type="evidence" value="ECO:0007669"/>
    <property type="project" value="UniProtKB-UniRule"/>
</dbReference>
<dbReference type="FunFam" id="1.10.150.170:FF:000001">
    <property type="entry name" value="Ribosomal RNA small subunit methyltransferase H"/>
    <property type="match status" value="1"/>
</dbReference>
<dbReference type="Gene3D" id="1.10.150.170">
    <property type="entry name" value="Putative methyltransferase TM0872, insert domain"/>
    <property type="match status" value="1"/>
</dbReference>
<dbReference type="Gene3D" id="3.40.50.150">
    <property type="entry name" value="Vaccinia Virus protein VP39"/>
    <property type="match status" value="1"/>
</dbReference>
<dbReference type="HAMAP" id="MF_01007">
    <property type="entry name" value="16SrRNA_methyltr_H"/>
    <property type="match status" value="1"/>
</dbReference>
<dbReference type="InterPro" id="IPR002903">
    <property type="entry name" value="RsmH"/>
</dbReference>
<dbReference type="InterPro" id="IPR023397">
    <property type="entry name" value="SAM-dep_MeTrfase_MraW_recog"/>
</dbReference>
<dbReference type="InterPro" id="IPR029063">
    <property type="entry name" value="SAM-dependent_MTases_sf"/>
</dbReference>
<dbReference type="NCBIfam" id="TIGR00006">
    <property type="entry name" value="16S rRNA (cytosine(1402)-N(4))-methyltransferase RsmH"/>
    <property type="match status" value="1"/>
</dbReference>
<dbReference type="PANTHER" id="PTHR11265:SF0">
    <property type="entry name" value="12S RRNA N4-METHYLCYTIDINE METHYLTRANSFERASE"/>
    <property type="match status" value="1"/>
</dbReference>
<dbReference type="PANTHER" id="PTHR11265">
    <property type="entry name" value="S-ADENOSYL-METHYLTRANSFERASE MRAW"/>
    <property type="match status" value="1"/>
</dbReference>
<dbReference type="Pfam" id="PF01795">
    <property type="entry name" value="Methyltransf_5"/>
    <property type="match status" value="1"/>
</dbReference>
<dbReference type="PIRSF" id="PIRSF004486">
    <property type="entry name" value="MraW"/>
    <property type="match status" value="1"/>
</dbReference>
<dbReference type="SUPFAM" id="SSF81799">
    <property type="entry name" value="Putative methyltransferase TM0872, insert domain"/>
    <property type="match status" value="1"/>
</dbReference>
<dbReference type="SUPFAM" id="SSF53335">
    <property type="entry name" value="S-adenosyl-L-methionine-dependent methyltransferases"/>
    <property type="match status" value="1"/>
</dbReference>
<proteinExistence type="inferred from homology"/>
<keyword id="KW-0963">Cytoplasm</keyword>
<keyword id="KW-0489">Methyltransferase</keyword>
<keyword id="KW-0698">rRNA processing</keyword>
<keyword id="KW-0949">S-adenosyl-L-methionine</keyword>
<keyword id="KW-0808">Transferase</keyword>
<sequence length="310" mass="34945">MFKHVTVLLKETVDGLDIKPSGTYVDCTLGGGGHSSYLLSQLTDGGKLIAFDQDEIAIQNAKEKFSSYGEQFVTVKSNFRYLSEKLHELGITEVDGILFDLGVSSPQLDTPERGFSYHHDAPLDMRMDQDAPLTAYDVVNSWSYEQLVRIFFQYGEEKFSKQITRKIEAYRENKAIETTGELVELIKEGIPAPARRTGGHPAKRVFQAIRIAVNDELKVFEEALESAIDMVKPGGRVSVITFHSLEDRICKTTFKRNSTTPQLPQGLPIIPDEFKPKLKLITRKPILPSDIELEENNRARSAKLRIAEKR</sequence>
<organism>
    <name type="scientific">Bacillus mycoides (strain KBAB4)</name>
    <name type="common">Bacillus weihenstephanensis</name>
    <dbReference type="NCBI Taxonomy" id="315730"/>
    <lineage>
        <taxon>Bacteria</taxon>
        <taxon>Bacillati</taxon>
        <taxon>Bacillota</taxon>
        <taxon>Bacilli</taxon>
        <taxon>Bacillales</taxon>
        <taxon>Bacillaceae</taxon>
        <taxon>Bacillus</taxon>
        <taxon>Bacillus cereus group</taxon>
    </lineage>
</organism>
<evidence type="ECO:0000255" key="1">
    <source>
        <dbReference type="HAMAP-Rule" id="MF_01007"/>
    </source>
</evidence>
<comment type="function">
    <text evidence="1">Specifically methylates the N4 position of cytidine in position 1402 (C1402) of 16S rRNA.</text>
</comment>
<comment type="catalytic activity">
    <reaction evidence="1">
        <text>cytidine(1402) in 16S rRNA + S-adenosyl-L-methionine = N(4)-methylcytidine(1402) in 16S rRNA + S-adenosyl-L-homocysteine + H(+)</text>
        <dbReference type="Rhea" id="RHEA:42928"/>
        <dbReference type="Rhea" id="RHEA-COMP:10286"/>
        <dbReference type="Rhea" id="RHEA-COMP:10287"/>
        <dbReference type="ChEBI" id="CHEBI:15378"/>
        <dbReference type="ChEBI" id="CHEBI:57856"/>
        <dbReference type="ChEBI" id="CHEBI:59789"/>
        <dbReference type="ChEBI" id="CHEBI:74506"/>
        <dbReference type="ChEBI" id="CHEBI:82748"/>
        <dbReference type="EC" id="2.1.1.199"/>
    </reaction>
</comment>
<comment type="subcellular location">
    <subcellularLocation>
        <location evidence="1">Cytoplasm</location>
    </subcellularLocation>
</comment>
<comment type="similarity">
    <text evidence="1">Belongs to the methyltransferase superfamily. RsmH family.</text>
</comment>
<accession>A9VU80</accession>
<reference key="1">
    <citation type="journal article" date="2008" name="Chem. Biol. Interact.">
        <title>Extending the Bacillus cereus group genomics to putative food-borne pathogens of different toxicity.</title>
        <authorList>
            <person name="Lapidus A."/>
            <person name="Goltsman E."/>
            <person name="Auger S."/>
            <person name="Galleron N."/>
            <person name="Segurens B."/>
            <person name="Dossat C."/>
            <person name="Land M.L."/>
            <person name="Broussolle V."/>
            <person name="Brillard J."/>
            <person name="Guinebretiere M.-H."/>
            <person name="Sanchis V."/>
            <person name="Nguen-the C."/>
            <person name="Lereclus D."/>
            <person name="Richardson P."/>
            <person name="Wincker P."/>
            <person name="Weissenbach J."/>
            <person name="Ehrlich S.D."/>
            <person name="Sorokin A."/>
        </authorList>
    </citation>
    <scope>NUCLEOTIDE SEQUENCE [LARGE SCALE GENOMIC DNA]</scope>
    <source>
        <strain>KBAB4</strain>
    </source>
</reference>
<gene>
    <name evidence="1" type="primary">rsmH</name>
    <name type="synonym">mraW</name>
    <name type="ordered locus">BcerKBAB4_3745</name>
</gene>
<protein>
    <recommendedName>
        <fullName evidence="1">Ribosomal RNA small subunit methyltransferase H</fullName>
        <ecNumber evidence="1">2.1.1.199</ecNumber>
    </recommendedName>
    <alternativeName>
        <fullName evidence="1">16S rRNA m(4)C1402 methyltransferase</fullName>
    </alternativeName>
    <alternativeName>
        <fullName evidence="1">rRNA (cytosine-N(4)-)-methyltransferase RsmH</fullName>
    </alternativeName>
</protein>
<name>RSMH_BACMK</name>
<feature type="chain" id="PRO_0000386737" description="Ribosomal RNA small subunit methyltransferase H">
    <location>
        <begin position="1"/>
        <end position="310"/>
    </location>
</feature>
<feature type="binding site" evidence="1">
    <location>
        <begin position="32"/>
        <end position="34"/>
    </location>
    <ligand>
        <name>S-adenosyl-L-methionine</name>
        <dbReference type="ChEBI" id="CHEBI:59789"/>
    </ligand>
</feature>
<feature type="binding site" evidence="1">
    <location>
        <position position="52"/>
    </location>
    <ligand>
        <name>S-adenosyl-L-methionine</name>
        <dbReference type="ChEBI" id="CHEBI:59789"/>
    </ligand>
</feature>
<feature type="binding site" evidence="1">
    <location>
        <position position="79"/>
    </location>
    <ligand>
        <name>S-adenosyl-L-methionine</name>
        <dbReference type="ChEBI" id="CHEBI:59789"/>
    </ligand>
</feature>
<feature type="binding site" evidence="1">
    <location>
        <position position="100"/>
    </location>
    <ligand>
        <name>S-adenosyl-L-methionine</name>
        <dbReference type="ChEBI" id="CHEBI:59789"/>
    </ligand>
</feature>
<feature type="binding site" evidence="1">
    <location>
        <position position="107"/>
    </location>
    <ligand>
        <name>S-adenosyl-L-methionine</name>
        <dbReference type="ChEBI" id="CHEBI:59789"/>
    </ligand>
</feature>